<evidence type="ECO:0000255" key="1">
    <source>
        <dbReference type="HAMAP-Rule" id="MF_00789"/>
    </source>
</evidence>
<dbReference type="EMBL" id="BA000037">
    <property type="protein sequence ID" value="BAC93748.1"/>
    <property type="molecule type" value="Genomic_DNA"/>
</dbReference>
<dbReference type="RefSeq" id="WP_011149760.1">
    <property type="nucleotide sequence ID" value="NC_005139.1"/>
</dbReference>
<dbReference type="KEGG" id="vvy:VV0984"/>
<dbReference type="PATRIC" id="fig|196600.6.peg.982"/>
<dbReference type="HOGENOM" id="CLU_073782_0_0_6"/>
<dbReference type="Proteomes" id="UP000002675">
    <property type="component" value="Chromosome I"/>
</dbReference>
<dbReference type="HAMAP" id="MF_00789">
    <property type="entry name" value="UPF0319"/>
    <property type="match status" value="1"/>
</dbReference>
<dbReference type="InterPro" id="IPR018635">
    <property type="entry name" value="UPF0319"/>
</dbReference>
<dbReference type="PANTHER" id="PTHR38108">
    <property type="entry name" value="UPF0319 PROTEIN YCCT"/>
    <property type="match status" value="1"/>
</dbReference>
<dbReference type="PANTHER" id="PTHR38108:SF1">
    <property type="entry name" value="UPF0319 PROTEIN YCCT"/>
    <property type="match status" value="1"/>
</dbReference>
<dbReference type="Pfam" id="PF09829">
    <property type="entry name" value="DUF2057"/>
    <property type="match status" value="1"/>
</dbReference>
<gene>
    <name type="ordered locus">VV0984</name>
</gene>
<accession>Q7MMT3</accession>
<sequence>MRYIGKWMMLGALVSSSVFADVKVNIHRDVAPLVVNGEKVGFFISKKSVLDFDNGLNQLVVRVEKLIDNNQGEKEKFNSKPVIITFKASDRELDLFVDSVISRSKDAEEFELNPFFILKDKNGDPIQIMKQEILPNGGGITRDYETEVYRYNKKNNIIIASEKLSQSIAEQPIVEMEKGVEMVQYWYEKASNEDKKQFASLAFENRKSEIAKQNTKSQELDMLVYWFNQTSENGRKNIINWIMNN</sequence>
<comment type="similarity">
    <text evidence="1">Belongs to the UPF0319 family.</text>
</comment>
<name>Y984_VIBVY</name>
<reference key="1">
    <citation type="journal article" date="2003" name="Genome Res.">
        <title>Comparative genome analysis of Vibrio vulnificus, a marine pathogen.</title>
        <authorList>
            <person name="Chen C.-Y."/>
            <person name="Wu K.-M."/>
            <person name="Chang Y.-C."/>
            <person name="Chang C.-H."/>
            <person name="Tsai H.-C."/>
            <person name="Liao T.-L."/>
            <person name="Liu Y.-M."/>
            <person name="Chen H.-J."/>
            <person name="Shen A.B.-T."/>
            <person name="Li J.-C."/>
            <person name="Su T.-L."/>
            <person name="Shao C.-P."/>
            <person name="Lee C.-T."/>
            <person name="Hor L.-I."/>
            <person name="Tsai S.-F."/>
        </authorList>
    </citation>
    <scope>NUCLEOTIDE SEQUENCE [LARGE SCALE GENOMIC DNA]</scope>
    <source>
        <strain>YJ016</strain>
    </source>
</reference>
<protein>
    <recommendedName>
        <fullName evidence="1">UPF0319 protein VV0984</fullName>
    </recommendedName>
</protein>
<keyword id="KW-0732">Signal</keyword>
<proteinExistence type="inferred from homology"/>
<feature type="signal peptide" evidence="1">
    <location>
        <begin position="1"/>
        <end position="20"/>
    </location>
</feature>
<feature type="chain" id="PRO_0000036315" description="UPF0319 protein VV0984">
    <location>
        <begin position="21"/>
        <end position="245"/>
    </location>
</feature>
<organism>
    <name type="scientific">Vibrio vulnificus (strain YJ016)</name>
    <dbReference type="NCBI Taxonomy" id="196600"/>
    <lineage>
        <taxon>Bacteria</taxon>
        <taxon>Pseudomonadati</taxon>
        <taxon>Pseudomonadota</taxon>
        <taxon>Gammaproteobacteria</taxon>
        <taxon>Vibrionales</taxon>
        <taxon>Vibrionaceae</taxon>
        <taxon>Vibrio</taxon>
    </lineage>
</organism>